<dbReference type="EC" id="3.1.3.5" evidence="1"/>
<dbReference type="EMBL" id="CP000890">
    <property type="protein sequence ID" value="ABX78973.1"/>
    <property type="molecule type" value="Genomic_DNA"/>
</dbReference>
<dbReference type="RefSeq" id="WP_005770587.1">
    <property type="nucleotide sequence ID" value="NC_010117.1"/>
</dbReference>
<dbReference type="SMR" id="A9N9U7"/>
<dbReference type="KEGG" id="cbs:COXBURSA331_A1863"/>
<dbReference type="HOGENOM" id="CLU_045192_1_2_6"/>
<dbReference type="GO" id="GO:0005737">
    <property type="term" value="C:cytoplasm"/>
    <property type="evidence" value="ECO:0007669"/>
    <property type="project" value="UniProtKB-SubCell"/>
</dbReference>
<dbReference type="GO" id="GO:0008254">
    <property type="term" value="F:3'-nucleotidase activity"/>
    <property type="evidence" value="ECO:0007669"/>
    <property type="project" value="TreeGrafter"/>
</dbReference>
<dbReference type="GO" id="GO:0008253">
    <property type="term" value="F:5'-nucleotidase activity"/>
    <property type="evidence" value="ECO:0007669"/>
    <property type="project" value="UniProtKB-UniRule"/>
</dbReference>
<dbReference type="GO" id="GO:0004309">
    <property type="term" value="F:exopolyphosphatase activity"/>
    <property type="evidence" value="ECO:0007669"/>
    <property type="project" value="TreeGrafter"/>
</dbReference>
<dbReference type="GO" id="GO:0046872">
    <property type="term" value="F:metal ion binding"/>
    <property type="evidence" value="ECO:0007669"/>
    <property type="project" value="UniProtKB-UniRule"/>
</dbReference>
<dbReference type="GO" id="GO:0000166">
    <property type="term" value="F:nucleotide binding"/>
    <property type="evidence" value="ECO:0007669"/>
    <property type="project" value="UniProtKB-KW"/>
</dbReference>
<dbReference type="FunFam" id="3.40.1210.10:FF:000001">
    <property type="entry name" value="5'/3'-nucleotidase SurE"/>
    <property type="match status" value="1"/>
</dbReference>
<dbReference type="Gene3D" id="3.40.1210.10">
    <property type="entry name" value="Survival protein SurE-like phosphatase/nucleotidase"/>
    <property type="match status" value="1"/>
</dbReference>
<dbReference type="HAMAP" id="MF_00060">
    <property type="entry name" value="SurE"/>
    <property type="match status" value="1"/>
</dbReference>
<dbReference type="InterPro" id="IPR030048">
    <property type="entry name" value="SurE"/>
</dbReference>
<dbReference type="InterPro" id="IPR002828">
    <property type="entry name" value="SurE-like_Pase/nucleotidase"/>
</dbReference>
<dbReference type="InterPro" id="IPR036523">
    <property type="entry name" value="SurE-like_sf"/>
</dbReference>
<dbReference type="NCBIfam" id="NF001489">
    <property type="entry name" value="PRK00346.1-3"/>
    <property type="match status" value="1"/>
</dbReference>
<dbReference type="NCBIfam" id="NF001490">
    <property type="entry name" value="PRK00346.1-4"/>
    <property type="match status" value="1"/>
</dbReference>
<dbReference type="NCBIfam" id="TIGR00087">
    <property type="entry name" value="surE"/>
    <property type="match status" value="1"/>
</dbReference>
<dbReference type="PANTHER" id="PTHR30457">
    <property type="entry name" value="5'-NUCLEOTIDASE SURE"/>
    <property type="match status" value="1"/>
</dbReference>
<dbReference type="PANTHER" id="PTHR30457:SF12">
    <property type="entry name" value="5'_3'-NUCLEOTIDASE SURE"/>
    <property type="match status" value="1"/>
</dbReference>
<dbReference type="Pfam" id="PF01975">
    <property type="entry name" value="SurE"/>
    <property type="match status" value="1"/>
</dbReference>
<dbReference type="SUPFAM" id="SSF64167">
    <property type="entry name" value="SurE-like"/>
    <property type="match status" value="1"/>
</dbReference>
<protein>
    <recommendedName>
        <fullName evidence="1">5'-nucleotidase SurE</fullName>
        <ecNumber evidence="1">3.1.3.5</ecNumber>
    </recommendedName>
    <alternativeName>
        <fullName evidence="1">Nucleoside 5'-monophosphate phosphohydrolase</fullName>
    </alternativeName>
</protein>
<keyword id="KW-0963">Cytoplasm</keyword>
<keyword id="KW-0378">Hydrolase</keyword>
<keyword id="KW-0479">Metal-binding</keyword>
<keyword id="KW-0547">Nucleotide-binding</keyword>
<sequence>MKKTATPKLRLLLSNDDGVYAKGLAILAKTLADLGEVDVVAPDRNRSGASNSLTLNAPLHIKNLENGMISVEGTPTDCVHLAITGVLPEMPDMVVAGINAGPNLGDDVWYSGTVAAAMEGRFLGLPALAVSLGGELFRYYETAAKVVYQLIQRIEKDPLPPSTILNINVPDLPYEELKGFEVTRLGTRHRAEPTIRQIDPRGHPIYWVGAAGPEQDSGPGTDFFAMNHHCVSITPLRVDLTHYEAFDQLASWVKRLEM</sequence>
<feature type="chain" id="PRO_1000075024" description="5'-nucleotidase SurE">
    <location>
        <begin position="1"/>
        <end position="258"/>
    </location>
</feature>
<feature type="binding site" evidence="1">
    <location>
        <position position="16"/>
    </location>
    <ligand>
        <name>a divalent metal cation</name>
        <dbReference type="ChEBI" id="CHEBI:60240"/>
    </ligand>
</feature>
<feature type="binding site" evidence="1">
    <location>
        <position position="17"/>
    </location>
    <ligand>
        <name>a divalent metal cation</name>
        <dbReference type="ChEBI" id="CHEBI:60240"/>
    </ligand>
</feature>
<feature type="binding site" evidence="1">
    <location>
        <position position="47"/>
    </location>
    <ligand>
        <name>a divalent metal cation</name>
        <dbReference type="ChEBI" id="CHEBI:60240"/>
    </ligand>
</feature>
<feature type="binding site" evidence="1">
    <location>
        <position position="99"/>
    </location>
    <ligand>
        <name>a divalent metal cation</name>
        <dbReference type="ChEBI" id="CHEBI:60240"/>
    </ligand>
</feature>
<comment type="function">
    <text evidence="1">Nucleotidase that shows phosphatase activity on nucleoside 5'-monophosphates.</text>
</comment>
<comment type="catalytic activity">
    <reaction evidence="1">
        <text>a ribonucleoside 5'-phosphate + H2O = a ribonucleoside + phosphate</text>
        <dbReference type="Rhea" id="RHEA:12484"/>
        <dbReference type="ChEBI" id="CHEBI:15377"/>
        <dbReference type="ChEBI" id="CHEBI:18254"/>
        <dbReference type="ChEBI" id="CHEBI:43474"/>
        <dbReference type="ChEBI" id="CHEBI:58043"/>
        <dbReference type="EC" id="3.1.3.5"/>
    </reaction>
</comment>
<comment type="cofactor">
    <cofactor evidence="1">
        <name>a divalent metal cation</name>
        <dbReference type="ChEBI" id="CHEBI:60240"/>
    </cofactor>
    <text evidence="1">Binds 1 divalent metal cation per subunit.</text>
</comment>
<comment type="subcellular location">
    <subcellularLocation>
        <location evidence="1">Cytoplasm</location>
    </subcellularLocation>
</comment>
<comment type="similarity">
    <text evidence="1">Belongs to the SurE nucleotidase family.</text>
</comment>
<evidence type="ECO:0000255" key="1">
    <source>
        <dbReference type="HAMAP-Rule" id="MF_00060"/>
    </source>
</evidence>
<organism>
    <name type="scientific">Coxiella burnetii (strain RSA 331 / Henzerling II)</name>
    <dbReference type="NCBI Taxonomy" id="360115"/>
    <lineage>
        <taxon>Bacteria</taxon>
        <taxon>Pseudomonadati</taxon>
        <taxon>Pseudomonadota</taxon>
        <taxon>Gammaproteobacteria</taxon>
        <taxon>Legionellales</taxon>
        <taxon>Coxiellaceae</taxon>
        <taxon>Coxiella</taxon>
    </lineage>
</organism>
<reference key="1">
    <citation type="submission" date="2007-11" db="EMBL/GenBank/DDBJ databases">
        <title>Genome sequencing of phylogenetically and phenotypically diverse Coxiella burnetii isolates.</title>
        <authorList>
            <person name="Seshadri R."/>
            <person name="Samuel J.E."/>
        </authorList>
    </citation>
    <scope>NUCLEOTIDE SEQUENCE [LARGE SCALE GENOMIC DNA]</scope>
    <source>
        <strain>RSA 331 / Henzerling II</strain>
    </source>
</reference>
<name>SURE_COXBR</name>
<accession>A9N9U7</accession>
<proteinExistence type="inferred from homology"/>
<gene>
    <name evidence="1" type="primary">surE</name>
    <name type="ordered locus">COXBURSA331_A1863</name>
</gene>